<name>DCUP_PSET1</name>
<protein>
    <recommendedName>
        <fullName evidence="1">Uroporphyrinogen decarboxylase</fullName>
        <shortName evidence="1">UPD</shortName>
        <shortName evidence="1">URO-D</shortName>
        <ecNumber evidence="1">4.1.1.37</ecNumber>
    </recommendedName>
</protein>
<accession>Q3IJU2</accession>
<gene>
    <name evidence="1" type="primary">hemE</name>
    <name type="ordered locus">PSHAa2899</name>
</gene>
<evidence type="ECO:0000255" key="1">
    <source>
        <dbReference type="HAMAP-Rule" id="MF_00218"/>
    </source>
</evidence>
<organism>
    <name type="scientific">Pseudoalteromonas translucida (strain TAC 125)</name>
    <dbReference type="NCBI Taxonomy" id="326442"/>
    <lineage>
        <taxon>Bacteria</taxon>
        <taxon>Pseudomonadati</taxon>
        <taxon>Pseudomonadota</taxon>
        <taxon>Gammaproteobacteria</taxon>
        <taxon>Alteromonadales</taxon>
        <taxon>Pseudoalteromonadaceae</taxon>
        <taxon>Pseudoalteromonas</taxon>
    </lineage>
</organism>
<dbReference type="EC" id="4.1.1.37" evidence="1"/>
<dbReference type="EMBL" id="CR954246">
    <property type="protein sequence ID" value="CAI87934.1"/>
    <property type="molecule type" value="Genomic_DNA"/>
</dbReference>
<dbReference type="SMR" id="Q3IJU2"/>
<dbReference type="STRING" id="326442.PSHAa2899"/>
<dbReference type="KEGG" id="pha:PSHAa2899"/>
<dbReference type="PATRIC" id="fig|326442.8.peg.2798"/>
<dbReference type="eggNOG" id="COG0407">
    <property type="taxonomic scope" value="Bacteria"/>
</dbReference>
<dbReference type="HOGENOM" id="CLU_040933_0_0_6"/>
<dbReference type="BioCyc" id="PHAL326442:PSHA_RS14225-MONOMER"/>
<dbReference type="UniPathway" id="UPA00251">
    <property type="reaction ID" value="UER00321"/>
</dbReference>
<dbReference type="Proteomes" id="UP000006843">
    <property type="component" value="Chromosome I"/>
</dbReference>
<dbReference type="GO" id="GO:0005829">
    <property type="term" value="C:cytosol"/>
    <property type="evidence" value="ECO:0007669"/>
    <property type="project" value="TreeGrafter"/>
</dbReference>
<dbReference type="GO" id="GO:0004853">
    <property type="term" value="F:uroporphyrinogen decarboxylase activity"/>
    <property type="evidence" value="ECO:0007669"/>
    <property type="project" value="UniProtKB-UniRule"/>
</dbReference>
<dbReference type="GO" id="GO:0019353">
    <property type="term" value="P:protoporphyrinogen IX biosynthetic process from glutamate"/>
    <property type="evidence" value="ECO:0007669"/>
    <property type="project" value="TreeGrafter"/>
</dbReference>
<dbReference type="CDD" id="cd00717">
    <property type="entry name" value="URO-D"/>
    <property type="match status" value="1"/>
</dbReference>
<dbReference type="FunFam" id="3.20.20.210:FF:000001">
    <property type="entry name" value="Uroporphyrinogen decarboxylase"/>
    <property type="match status" value="1"/>
</dbReference>
<dbReference type="Gene3D" id="3.20.20.210">
    <property type="match status" value="1"/>
</dbReference>
<dbReference type="HAMAP" id="MF_00218">
    <property type="entry name" value="URO_D"/>
    <property type="match status" value="1"/>
</dbReference>
<dbReference type="InterPro" id="IPR038071">
    <property type="entry name" value="UROD/MetE-like_sf"/>
</dbReference>
<dbReference type="InterPro" id="IPR006361">
    <property type="entry name" value="Uroporphyrinogen_deCO2ase_HemE"/>
</dbReference>
<dbReference type="InterPro" id="IPR000257">
    <property type="entry name" value="Uroporphyrinogen_deCOase"/>
</dbReference>
<dbReference type="NCBIfam" id="TIGR01464">
    <property type="entry name" value="hemE"/>
    <property type="match status" value="1"/>
</dbReference>
<dbReference type="PANTHER" id="PTHR21091">
    <property type="entry name" value="METHYLTETRAHYDROFOLATE:HOMOCYSTEINE METHYLTRANSFERASE RELATED"/>
    <property type="match status" value="1"/>
</dbReference>
<dbReference type="PANTHER" id="PTHR21091:SF169">
    <property type="entry name" value="UROPORPHYRINOGEN DECARBOXYLASE"/>
    <property type="match status" value="1"/>
</dbReference>
<dbReference type="Pfam" id="PF01208">
    <property type="entry name" value="URO-D"/>
    <property type="match status" value="1"/>
</dbReference>
<dbReference type="SUPFAM" id="SSF51726">
    <property type="entry name" value="UROD/MetE-like"/>
    <property type="match status" value="1"/>
</dbReference>
<dbReference type="PROSITE" id="PS00906">
    <property type="entry name" value="UROD_1"/>
    <property type="match status" value="1"/>
</dbReference>
<dbReference type="PROSITE" id="PS00907">
    <property type="entry name" value="UROD_2"/>
    <property type="match status" value="1"/>
</dbReference>
<keyword id="KW-0963">Cytoplasm</keyword>
<keyword id="KW-0210">Decarboxylase</keyword>
<keyword id="KW-0456">Lyase</keyword>
<keyword id="KW-0627">Porphyrin biosynthesis</keyword>
<keyword id="KW-1185">Reference proteome</keyword>
<comment type="function">
    <text evidence="1">Catalyzes the decarboxylation of four acetate groups of uroporphyrinogen-III to yield coproporphyrinogen-III.</text>
</comment>
<comment type="catalytic activity">
    <reaction evidence="1">
        <text>uroporphyrinogen III + 4 H(+) = coproporphyrinogen III + 4 CO2</text>
        <dbReference type="Rhea" id="RHEA:19865"/>
        <dbReference type="ChEBI" id="CHEBI:15378"/>
        <dbReference type="ChEBI" id="CHEBI:16526"/>
        <dbReference type="ChEBI" id="CHEBI:57308"/>
        <dbReference type="ChEBI" id="CHEBI:57309"/>
        <dbReference type="EC" id="4.1.1.37"/>
    </reaction>
</comment>
<comment type="pathway">
    <text evidence="1">Porphyrin-containing compound metabolism; protoporphyrin-IX biosynthesis; coproporphyrinogen-III from 5-aminolevulinate: step 4/4.</text>
</comment>
<comment type="subunit">
    <text evidence="1">Homodimer.</text>
</comment>
<comment type="subcellular location">
    <subcellularLocation>
        <location evidence="1">Cytoplasm</location>
    </subcellularLocation>
</comment>
<comment type="similarity">
    <text evidence="1">Belongs to the uroporphyrinogen decarboxylase family.</text>
</comment>
<sequence>MSELKNDRYLRALAKQPVDVTPVWMMRQAGRYLPEYRATRAQAGDFMSLCRNAELACEVTLQPLRRYPLDAAILFSDILTIPDAMGLGLYFETGEGPKFERPISSLSDVKKIPKLDPNDDLGYVMNAVSTIRRELKGEVPLIGFSGSPWTLATYMVEGGSSKVFGKIKKMAFAEPQTLHLLLDKLADSVIDYLNAQIKAGAQSLMVFDSWGGVLSPRDYNEFSLQYMHKIVDGLIREYDGRRVPVTLFTKNGGQWIEAIAATGCDAIGLDWTINISDAKRRVGDKVALQGNMDPSMLHGTPERIRQEVATILEDFGTGNGHVFNLGHGITPDVDPENAGVFINAVHEFSAKYHK</sequence>
<proteinExistence type="inferred from homology"/>
<feature type="chain" id="PRO_1000023949" description="Uroporphyrinogen decarboxylase">
    <location>
        <begin position="1"/>
        <end position="354"/>
    </location>
</feature>
<feature type="binding site" evidence="1">
    <location>
        <begin position="27"/>
        <end position="31"/>
    </location>
    <ligand>
        <name>substrate</name>
    </ligand>
</feature>
<feature type="binding site" evidence="1">
    <location>
        <position position="77"/>
    </location>
    <ligand>
        <name>substrate</name>
    </ligand>
</feature>
<feature type="binding site" evidence="1">
    <location>
        <position position="154"/>
    </location>
    <ligand>
        <name>substrate</name>
    </ligand>
</feature>
<feature type="binding site" evidence="1">
    <location>
        <position position="209"/>
    </location>
    <ligand>
        <name>substrate</name>
    </ligand>
</feature>
<feature type="binding site" evidence="1">
    <location>
        <position position="327"/>
    </location>
    <ligand>
        <name>substrate</name>
    </ligand>
</feature>
<feature type="site" description="Transition state stabilizer" evidence="1">
    <location>
        <position position="77"/>
    </location>
</feature>
<reference key="1">
    <citation type="journal article" date="2005" name="Genome Res.">
        <title>Coping with cold: the genome of the versatile marine Antarctica bacterium Pseudoalteromonas haloplanktis TAC125.</title>
        <authorList>
            <person name="Medigue C."/>
            <person name="Krin E."/>
            <person name="Pascal G."/>
            <person name="Barbe V."/>
            <person name="Bernsel A."/>
            <person name="Bertin P.N."/>
            <person name="Cheung F."/>
            <person name="Cruveiller S."/>
            <person name="D'Amico S."/>
            <person name="Duilio A."/>
            <person name="Fang G."/>
            <person name="Feller G."/>
            <person name="Ho C."/>
            <person name="Mangenot S."/>
            <person name="Marino G."/>
            <person name="Nilsson J."/>
            <person name="Parrilli E."/>
            <person name="Rocha E.P.C."/>
            <person name="Rouy Z."/>
            <person name="Sekowska A."/>
            <person name="Tutino M.L."/>
            <person name="Vallenet D."/>
            <person name="von Heijne G."/>
            <person name="Danchin A."/>
        </authorList>
    </citation>
    <scope>NUCLEOTIDE SEQUENCE [LARGE SCALE GENOMIC DNA]</scope>
    <source>
        <strain>TAC 125</strain>
    </source>
</reference>